<comment type="function">
    <text evidence="1">Catalyzes the complicated ring closure reaction between the two acyclic compounds 1-deoxy-D-xylulose-5-phosphate (DXP) and 3-amino-2-oxopropyl phosphate (1-amino-acetone-3-phosphate or AAP) to form pyridoxine 5'-phosphate (PNP) and inorganic phosphate.</text>
</comment>
<comment type="catalytic activity">
    <reaction evidence="1">
        <text>3-amino-2-oxopropyl phosphate + 1-deoxy-D-xylulose 5-phosphate = pyridoxine 5'-phosphate + phosphate + 2 H2O + H(+)</text>
        <dbReference type="Rhea" id="RHEA:15265"/>
        <dbReference type="ChEBI" id="CHEBI:15377"/>
        <dbReference type="ChEBI" id="CHEBI:15378"/>
        <dbReference type="ChEBI" id="CHEBI:43474"/>
        <dbReference type="ChEBI" id="CHEBI:57279"/>
        <dbReference type="ChEBI" id="CHEBI:57792"/>
        <dbReference type="ChEBI" id="CHEBI:58589"/>
        <dbReference type="EC" id="2.6.99.2"/>
    </reaction>
</comment>
<comment type="pathway">
    <text evidence="1">Cofactor biosynthesis; pyridoxine 5'-phosphate biosynthesis; pyridoxine 5'-phosphate from D-erythrose 4-phosphate: step 5/5.</text>
</comment>
<comment type="subunit">
    <text evidence="1">Homooctamer; tetramer of dimers.</text>
</comment>
<comment type="subcellular location">
    <subcellularLocation>
        <location evidence="1">Cytoplasm</location>
    </subcellularLocation>
</comment>
<comment type="similarity">
    <text evidence="1">Belongs to the PNP synthase family.</text>
</comment>
<dbReference type="EC" id="2.6.99.2" evidence="1"/>
<dbReference type="EMBL" id="CP000438">
    <property type="protein sequence ID" value="ABJ09925.1"/>
    <property type="molecule type" value="Genomic_DNA"/>
</dbReference>
<dbReference type="RefSeq" id="WP_003101974.1">
    <property type="nucleotide sequence ID" value="NZ_CP034244.1"/>
</dbReference>
<dbReference type="PDB" id="5DLC">
    <property type="method" value="X-ray"/>
    <property type="resolution" value="2.65 A"/>
    <property type="chains" value="A/B/C/D=1-248"/>
</dbReference>
<dbReference type="PDBsum" id="5DLC"/>
<dbReference type="SMR" id="Q02HS5"/>
<dbReference type="KEGG" id="pau:PA14_54290"/>
<dbReference type="PseudoCAP" id="PA14_54290"/>
<dbReference type="HOGENOM" id="CLU_074563_0_0_6"/>
<dbReference type="BioCyc" id="PAER208963:G1G74-4571-MONOMER"/>
<dbReference type="UniPathway" id="UPA00244">
    <property type="reaction ID" value="UER00313"/>
</dbReference>
<dbReference type="EvolutionaryTrace" id="Q02HS5"/>
<dbReference type="Proteomes" id="UP000000653">
    <property type="component" value="Chromosome"/>
</dbReference>
<dbReference type="GO" id="GO:0005829">
    <property type="term" value="C:cytosol"/>
    <property type="evidence" value="ECO:0007669"/>
    <property type="project" value="TreeGrafter"/>
</dbReference>
<dbReference type="GO" id="GO:0033856">
    <property type="term" value="F:pyridoxine 5'-phosphate synthase activity"/>
    <property type="evidence" value="ECO:0007669"/>
    <property type="project" value="UniProtKB-EC"/>
</dbReference>
<dbReference type="GO" id="GO:0008615">
    <property type="term" value="P:pyridoxine biosynthetic process"/>
    <property type="evidence" value="ECO:0007669"/>
    <property type="project" value="UniProtKB-UniRule"/>
</dbReference>
<dbReference type="CDD" id="cd00003">
    <property type="entry name" value="PNPsynthase"/>
    <property type="match status" value="1"/>
</dbReference>
<dbReference type="FunFam" id="3.20.20.70:FF:000042">
    <property type="entry name" value="Pyridoxine 5'-phosphate synthase"/>
    <property type="match status" value="1"/>
</dbReference>
<dbReference type="Gene3D" id="3.20.20.70">
    <property type="entry name" value="Aldolase class I"/>
    <property type="match status" value="1"/>
</dbReference>
<dbReference type="HAMAP" id="MF_00279">
    <property type="entry name" value="PdxJ"/>
    <property type="match status" value="1"/>
</dbReference>
<dbReference type="InterPro" id="IPR013785">
    <property type="entry name" value="Aldolase_TIM"/>
</dbReference>
<dbReference type="InterPro" id="IPR004569">
    <property type="entry name" value="PyrdxlP_synth_PdxJ"/>
</dbReference>
<dbReference type="InterPro" id="IPR036130">
    <property type="entry name" value="Pyridoxine-5'_phos_synth"/>
</dbReference>
<dbReference type="NCBIfam" id="TIGR00559">
    <property type="entry name" value="pdxJ"/>
    <property type="match status" value="1"/>
</dbReference>
<dbReference type="NCBIfam" id="NF003623">
    <property type="entry name" value="PRK05265.1-1"/>
    <property type="match status" value="1"/>
</dbReference>
<dbReference type="NCBIfam" id="NF003625">
    <property type="entry name" value="PRK05265.1-3"/>
    <property type="match status" value="1"/>
</dbReference>
<dbReference type="NCBIfam" id="NF003627">
    <property type="entry name" value="PRK05265.1-5"/>
    <property type="match status" value="1"/>
</dbReference>
<dbReference type="PANTHER" id="PTHR30456">
    <property type="entry name" value="PYRIDOXINE 5'-PHOSPHATE SYNTHASE"/>
    <property type="match status" value="1"/>
</dbReference>
<dbReference type="PANTHER" id="PTHR30456:SF0">
    <property type="entry name" value="PYRIDOXINE 5'-PHOSPHATE SYNTHASE"/>
    <property type="match status" value="1"/>
</dbReference>
<dbReference type="Pfam" id="PF03740">
    <property type="entry name" value="PdxJ"/>
    <property type="match status" value="1"/>
</dbReference>
<dbReference type="SUPFAM" id="SSF63892">
    <property type="entry name" value="Pyridoxine 5'-phosphate synthase"/>
    <property type="match status" value="1"/>
</dbReference>
<gene>
    <name evidence="1" type="primary">pdxJ</name>
    <name type="ordered locus">PA14_54290</name>
</gene>
<name>PDXJ_PSEAB</name>
<keyword id="KW-0002">3D-structure</keyword>
<keyword id="KW-0963">Cytoplasm</keyword>
<keyword id="KW-0664">Pyridoxine biosynthesis</keyword>
<keyword id="KW-0808">Transferase</keyword>
<evidence type="ECO:0000255" key="1">
    <source>
        <dbReference type="HAMAP-Rule" id="MF_00279"/>
    </source>
</evidence>
<evidence type="ECO:0007829" key="2">
    <source>
        <dbReference type="PDB" id="5DLC"/>
    </source>
</evidence>
<organism>
    <name type="scientific">Pseudomonas aeruginosa (strain UCBPP-PA14)</name>
    <dbReference type="NCBI Taxonomy" id="208963"/>
    <lineage>
        <taxon>Bacteria</taxon>
        <taxon>Pseudomonadati</taxon>
        <taxon>Pseudomonadota</taxon>
        <taxon>Gammaproteobacteria</taxon>
        <taxon>Pseudomonadales</taxon>
        <taxon>Pseudomonadaceae</taxon>
        <taxon>Pseudomonas</taxon>
    </lineage>
</organism>
<feature type="chain" id="PRO_1000022391" description="Pyridoxine 5'-phosphate synthase">
    <location>
        <begin position="1"/>
        <end position="248"/>
    </location>
</feature>
<feature type="active site" description="Proton acceptor" evidence="1">
    <location>
        <position position="48"/>
    </location>
</feature>
<feature type="active site" description="Proton acceptor" evidence="1">
    <location>
        <position position="75"/>
    </location>
</feature>
<feature type="active site" description="Proton donor" evidence="1">
    <location>
        <position position="196"/>
    </location>
</feature>
<feature type="binding site" evidence="1">
    <location>
        <position position="12"/>
    </location>
    <ligand>
        <name>3-amino-2-oxopropyl phosphate</name>
        <dbReference type="ChEBI" id="CHEBI:57279"/>
    </ligand>
</feature>
<feature type="binding site" evidence="1">
    <location>
        <begin position="14"/>
        <end position="15"/>
    </location>
    <ligand>
        <name>1-deoxy-D-xylulose 5-phosphate</name>
        <dbReference type="ChEBI" id="CHEBI:57792"/>
    </ligand>
</feature>
<feature type="binding site" evidence="1">
    <location>
        <position position="23"/>
    </location>
    <ligand>
        <name>3-amino-2-oxopropyl phosphate</name>
        <dbReference type="ChEBI" id="CHEBI:57279"/>
    </ligand>
</feature>
<feature type="binding site" evidence="1">
    <location>
        <position position="50"/>
    </location>
    <ligand>
        <name>1-deoxy-D-xylulose 5-phosphate</name>
        <dbReference type="ChEBI" id="CHEBI:57792"/>
    </ligand>
</feature>
<feature type="binding site" evidence="1">
    <location>
        <position position="55"/>
    </location>
    <ligand>
        <name>1-deoxy-D-xylulose 5-phosphate</name>
        <dbReference type="ChEBI" id="CHEBI:57792"/>
    </ligand>
</feature>
<feature type="binding site" evidence="1">
    <location>
        <position position="105"/>
    </location>
    <ligand>
        <name>1-deoxy-D-xylulose 5-phosphate</name>
        <dbReference type="ChEBI" id="CHEBI:57792"/>
    </ligand>
</feature>
<feature type="binding site" evidence="1">
    <location>
        <position position="197"/>
    </location>
    <ligand>
        <name>3-amino-2-oxopropyl phosphate</name>
        <dbReference type="ChEBI" id="CHEBI:57279"/>
    </ligand>
</feature>
<feature type="binding site" evidence="1">
    <location>
        <begin position="218"/>
        <end position="219"/>
    </location>
    <ligand>
        <name>3-amino-2-oxopropyl phosphate</name>
        <dbReference type="ChEBI" id="CHEBI:57279"/>
    </ligand>
</feature>
<feature type="site" description="Transition state stabilizer" evidence="1">
    <location>
        <position position="156"/>
    </location>
</feature>
<feature type="strand" evidence="2">
    <location>
        <begin position="8"/>
        <end position="12"/>
    </location>
</feature>
<feature type="helix" evidence="2">
    <location>
        <begin position="14"/>
        <end position="21"/>
    </location>
</feature>
<feature type="turn" evidence="2">
    <location>
        <begin position="22"/>
        <end position="24"/>
    </location>
</feature>
<feature type="helix" evidence="2">
    <location>
        <begin position="30"/>
        <end position="39"/>
    </location>
</feature>
<feature type="strand" evidence="2">
    <location>
        <begin position="43"/>
        <end position="48"/>
    </location>
</feature>
<feature type="helix" evidence="2">
    <location>
        <begin position="58"/>
        <end position="67"/>
    </location>
</feature>
<feature type="strand" evidence="2">
    <location>
        <begin position="72"/>
        <end position="76"/>
    </location>
</feature>
<feature type="helix" evidence="2">
    <location>
        <begin position="80"/>
        <end position="89"/>
    </location>
</feature>
<feature type="strand" evidence="2">
    <location>
        <begin position="92"/>
        <end position="96"/>
    </location>
</feature>
<feature type="helix" evidence="2">
    <location>
        <begin position="101"/>
        <end position="103"/>
    </location>
</feature>
<feature type="strand" evidence="2">
    <location>
        <begin position="106"/>
        <end position="110"/>
    </location>
</feature>
<feature type="helix" evidence="2">
    <location>
        <begin position="113"/>
        <end position="115"/>
    </location>
</feature>
<feature type="helix" evidence="2">
    <location>
        <begin position="116"/>
        <end position="127"/>
    </location>
</feature>
<feature type="turn" evidence="2">
    <location>
        <begin position="128"/>
        <end position="130"/>
    </location>
</feature>
<feature type="strand" evidence="2">
    <location>
        <begin position="132"/>
        <end position="137"/>
    </location>
</feature>
<feature type="helix" evidence="2">
    <location>
        <begin position="141"/>
        <end position="149"/>
    </location>
</feature>
<feature type="strand" evidence="2">
    <location>
        <begin position="153"/>
        <end position="157"/>
    </location>
</feature>
<feature type="helix" evidence="2">
    <location>
        <begin position="160"/>
        <end position="163"/>
    </location>
</feature>
<feature type="helix" evidence="2">
    <location>
        <begin position="168"/>
        <end position="187"/>
    </location>
</feature>
<feature type="strand" evidence="2">
    <location>
        <begin position="191"/>
        <end position="194"/>
    </location>
</feature>
<feature type="turn" evidence="2">
    <location>
        <begin position="200"/>
        <end position="202"/>
    </location>
</feature>
<feature type="helix" evidence="2">
    <location>
        <begin position="203"/>
        <end position="207"/>
    </location>
</feature>
<feature type="strand" evidence="2">
    <location>
        <begin position="214"/>
        <end position="217"/>
    </location>
</feature>
<feature type="helix" evidence="2">
    <location>
        <begin position="219"/>
        <end position="228"/>
    </location>
</feature>
<feature type="helix" evidence="2">
    <location>
        <begin position="230"/>
        <end position="245"/>
    </location>
</feature>
<reference key="1">
    <citation type="journal article" date="2006" name="Genome Biol.">
        <title>Genomic analysis reveals that Pseudomonas aeruginosa virulence is combinatorial.</title>
        <authorList>
            <person name="Lee D.G."/>
            <person name="Urbach J.M."/>
            <person name="Wu G."/>
            <person name="Liberati N.T."/>
            <person name="Feinbaum R.L."/>
            <person name="Miyata S."/>
            <person name="Diggins L.T."/>
            <person name="He J."/>
            <person name="Saucier M."/>
            <person name="Deziel E."/>
            <person name="Friedman L."/>
            <person name="Li L."/>
            <person name="Grills G."/>
            <person name="Montgomery K."/>
            <person name="Kucherlapati R."/>
            <person name="Rahme L.G."/>
            <person name="Ausubel F.M."/>
        </authorList>
    </citation>
    <scope>NUCLEOTIDE SEQUENCE [LARGE SCALE GENOMIC DNA]</scope>
    <source>
        <strain>UCBPP-PA14</strain>
    </source>
</reference>
<accession>Q02HS5</accession>
<protein>
    <recommendedName>
        <fullName evidence="1">Pyridoxine 5'-phosphate synthase</fullName>
        <shortName evidence="1">PNP synthase</shortName>
        <ecNumber evidence="1">2.6.99.2</ecNumber>
    </recommendedName>
</protein>
<proteinExistence type="evidence at protein level"/>
<sequence>MTEATRILLGVNIDHVATLRQARGTRYPDPVKAALDAEEAGADGITVHLREDRRHIQERDVRVLKEVLQTRMNFEMGVTEEMLAFAEEIRPAHSCLVPERREELTTEGGLDVAGQEQRIRDAVRRLAAVGSEVSLFIDPDPRQIEASARVGAPAIELHTGRYADAEDPEEQARELQRVREGVALGRSLGLIVNAGHGLHYHNVEPVAAIDGINELNIGHAIVAHALFVGFRQAVAEMKALMLAAATKR</sequence>